<sequence>MKQSHFFAHLSRLKLINRWPLMRNVRTENVSEHSLQVAMVAHALAAIKNRKFGGNVNAERIALLAMYHDASEVLTGDLPTPVKYFNSQIAQEYKAIEKIAQQKLVDMVPEELQDIFAPLIDEHAYSDEEKSLVKQADALCAYLKCLEELAAGNNEFLLAKTRLEATLEARRSQEMDYFMEVFVPSFHLSLDEISQDSPL</sequence>
<dbReference type="EC" id="3.1.3.89" evidence="1"/>
<dbReference type="EMBL" id="AE014075">
    <property type="protein sequence ID" value="AAN81286.1"/>
    <property type="molecule type" value="Genomic_DNA"/>
</dbReference>
<dbReference type="RefSeq" id="WP_000813854.1">
    <property type="nucleotide sequence ID" value="NZ_CP051263.1"/>
</dbReference>
<dbReference type="SMR" id="Q8FFJ5"/>
<dbReference type="STRING" id="199310.c2832"/>
<dbReference type="KEGG" id="ecc:c2832"/>
<dbReference type="eggNOG" id="COG1896">
    <property type="taxonomic scope" value="Bacteria"/>
</dbReference>
<dbReference type="HOGENOM" id="CLU_084784_0_0_6"/>
<dbReference type="BioCyc" id="ECOL199310:C2832-MONOMER"/>
<dbReference type="Proteomes" id="UP000001410">
    <property type="component" value="Chromosome"/>
</dbReference>
<dbReference type="GO" id="GO:0005737">
    <property type="term" value="C:cytoplasm"/>
    <property type="evidence" value="ECO:0007669"/>
    <property type="project" value="UniProtKB-SubCell"/>
</dbReference>
<dbReference type="GO" id="GO:0002953">
    <property type="term" value="F:5'-deoxynucleotidase activity"/>
    <property type="evidence" value="ECO:0007669"/>
    <property type="project" value="UniProtKB-EC"/>
</dbReference>
<dbReference type="GO" id="GO:0046872">
    <property type="term" value="F:metal ion binding"/>
    <property type="evidence" value="ECO:0007669"/>
    <property type="project" value="UniProtKB-KW"/>
</dbReference>
<dbReference type="GO" id="GO:0000166">
    <property type="term" value="F:nucleotide binding"/>
    <property type="evidence" value="ECO:0007669"/>
    <property type="project" value="UniProtKB-KW"/>
</dbReference>
<dbReference type="CDD" id="cd00077">
    <property type="entry name" value="HDc"/>
    <property type="match status" value="1"/>
</dbReference>
<dbReference type="FunFam" id="1.10.3210.10:FF:000002">
    <property type="entry name" value="Nucleotidase YfbR"/>
    <property type="match status" value="1"/>
</dbReference>
<dbReference type="Gene3D" id="1.10.3210.10">
    <property type="entry name" value="Hypothetical protein af1432"/>
    <property type="match status" value="1"/>
</dbReference>
<dbReference type="HAMAP" id="MF_01100">
    <property type="entry name" value="5DNU"/>
    <property type="match status" value="1"/>
</dbReference>
<dbReference type="InterPro" id="IPR003607">
    <property type="entry name" value="HD/PDEase_dom"/>
</dbReference>
<dbReference type="InterPro" id="IPR006674">
    <property type="entry name" value="HD_domain"/>
</dbReference>
<dbReference type="InterPro" id="IPR022971">
    <property type="entry name" value="YfbR"/>
</dbReference>
<dbReference type="InterPro" id="IPR039356">
    <property type="entry name" value="YfbR/HDDC2"/>
</dbReference>
<dbReference type="NCBIfam" id="NF003009">
    <property type="entry name" value="PRK03826.1"/>
    <property type="match status" value="1"/>
</dbReference>
<dbReference type="PANTHER" id="PTHR11845">
    <property type="entry name" value="5'-DEOXYNUCLEOTIDASE HDDC2"/>
    <property type="match status" value="1"/>
</dbReference>
<dbReference type="PANTHER" id="PTHR11845:SF13">
    <property type="entry name" value="5'-DEOXYNUCLEOTIDASE HDDC2"/>
    <property type="match status" value="1"/>
</dbReference>
<dbReference type="Pfam" id="PF12917">
    <property type="entry name" value="YfbR-like"/>
    <property type="match status" value="1"/>
</dbReference>
<dbReference type="SMART" id="SM00471">
    <property type="entry name" value="HDc"/>
    <property type="match status" value="1"/>
</dbReference>
<dbReference type="SUPFAM" id="SSF109604">
    <property type="entry name" value="HD-domain/PDEase-like"/>
    <property type="match status" value="1"/>
</dbReference>
<dbReference type="PROSITE" id="PS51831">
    <property type="entry name" value="HD"/>
    <property type="match status" value="1"/>
</dbReference>
<gene>
    <name evidence="1" type="primary">yfbR</name>
    <name type="ordered locus">c2832</name>
</gene>
<feature type="chain" id="PRO_0000095051" description="5'-deoxynucleotidase YfbR">
    <location>
        <begin position="1"/>
        <end position="199"/>
    </location>
</feature>
<feature type="domain" description="HD" evidence="2">
    <location>
        <begin position="30"/>
        <end position="142"/>
    </location>
</feature>
<feature type="binding site" evidence="1">
    <location>
        <begin position="18"/>
        <end position="19"/>
    </location>
    <ligand>
        <name>substrate</name>
    </ligand>
</feature>
<feature type="binding site" evidence="1">
    <location>
        <position position="33"/>
    </location>
    <ligand>
        <name>a divalent metal cation</name>
        <dbReference type="ChEBI" id="CHEBI:60240"/>
    </ligand>
</feature>
<feature type="binding site" evidence="1">
    <location>
        <position position="33"/>
    </location>
    <ligand>
        <name>substrate</name>
    </ligand>
</feature>
<feature type="binding site" evidence="1">
    <location>
        <position position="68"/>
    </location>
    <ligand>
        <name>a divalent metal cation</name>
        <dbReference type="ChEBI" id="CHEBI:60240"/>
    </ligand>
</feature>
<feature type="binding site" evidence="1">
    <location>
        <position position="69"/>
    </location>
    <ligand>
        <name>a divalent metal cation</name>
        <dbReference type="ChEBI" id="CHEBI:60240"/>
    </ligand>
</feature>
<feature type="binding site" evidence="1">
    <location>
        <position position="69"/>
    </location>
    <ligand>
        <name>substrate</name>
    </ligand>
</feature>
<feature type="binding site" evidence="1">
    <location>
        <begin position="77"/>
        <end position="80"/>
    </location>
    <ligand>
        <name>substrate</name>
    </ligand>
</feature>
<feature type="binding site" evidence="1">
    <location>
        <position position="137"/>
    </location>
    <ligand>
        <name>a divalent metal cation</name>
        <dbReference type="ChEBI" id="CHEBI:60240"/>
    </ligand>
</feature>
<feature type="binding site" evidence="1">
    <location>
        <position position="137"/>
    </location>
    <ligand>
        <name>substrate</name>
    </ligand>
</feature>
<feature type="site" description="Appears to be important in orienting the phosphate for catalysis" evidence="1">
    <location>
        <position position="18"/>
    </location>
</feature>
<evidence type="ECO:0000255" key="1">
    <source>
        <dbReference type="HAMAP-Rule" id="MF_01100"/>
    </source>
</evidence>
<evidence type="ECO:0000255" key="2">
    <source>
        <dbReference type="PROSITE-ProRule" id="PRU01175"/>
    </source>
</evidence>
<accession>Q8FFJ5</accession>
<proteinExistence type="inferred from homology"/>
<keyword id="KW-0963">Cytoplasm</keyword>
<keyword id="KW-0378">Hydrolase</keyword>
<keyword id="KW-0479">Metal-binding</keyword>
<keyword id="KW-0547">Nucleotide-binding</keyword>
<keyword id="KW-1185">Reference proteome</keyword>
<organism>
    <name type="scientific">Escherichia coli O6:H1 (strain CFT073 / ATCC 700928 / UPEC)</name>
    <dbReference type="NCBI Taxonomy" id="199310"/>
    <lineage>
        <taxon>Bacteria</taxon>
        <taxon>Pseudomonadati</taxon>
        <taxon>Pseudomonadota</taxon>
        <taxon>Gammaproteobacteria</taxon>
        <taxon>Enterobacterales</taxon>
        <taxon>Enterobacteriaceae</taxon>
        <taxon>Escherichia</taxon>
    </lineage>
</organism>
<comment type="function">
    <text evidence="1">Catalyzes the strictly specific dephosphorylation of 2'-deoxyribonucleoside 5'-monophosphates.</text>
</comment>
<comment type="catalytic activity">
    <reaction evidence="1">
        <text>a 2'-deoxyribonucleoside 5'-phosphate + H2O = a 2'-deoxyribonucleoside + phosphate</text>
        <dbReference type="Rhea" id="RHEA:36167"/>
        <dbReference type="ChEBI" id="CHEBI:15377"/>
        <dbReference type="ChEBI" id="CHEBI:18274"/>
        <dbReference type="ChEBI" id="CHEBI:43474"/>
        <dbReference type="ChEBI" id="CHEBI:65317"/>
        <dbReference type="EC" id="3.1.3.89"/>
    </reaction>
</comment>
<comment type="cofactor">
    <cofactor evidence="1">
        <name>a divalent metal cation</name>
        <dbReference type="ChEBI" id="CHEBI:60240"/>
    </cofactor>
</comment>
<comment type="subunit">
    <text evidence="1">Homodimer.</text>
</comment>
<comment type="subcellular location">
    <subcellularLocation>
        <location evidence="1">Cytoplasm</location>
    </subcellularLocation>
</comment>
<comment type="similarity">
    <text evidence="1">Belongs to the 5DNU family.</text>
</comment>
<name>5DNU_ECOL6</name>
<reference key="1">
    <citation type="journal article" date="2002" name="Proc. Natl. Acad. Sci. U.S.A.">
        <title>Extensive mosaic structure revealed by the complete genome sequence of uropathogenic Escherichia coli.</title>
        <authorList>
            <person name="Welch R.A."/>
            <person name="Burland V."/>
            <person name="Plunkett G. III"/>
            <person name="Redford P."/>
            <person name="Roesch P."/>
            <person name="Rasko D."/>
            <person name="Buckles E.L."/>
            <person name="Liou S.-R."/>
            <person name="Boutin A."/>
            <person name="Hackett J."/>
            <person name="Stroud D."/>
            <person name="Mayhew G.F."/>
            <person name="Rose D.J."/>
            <person name="Zhou S."/>
            <person name="Schwartz D.C."/>
            <person name="Perna N.T."/>
            <person name="Mobley H.L.T."/>
            <person name="Donnenberg M.S."/>
            <person name="Blattner F.R."/>
        </authorList>
    </citation>
    <scope>NUCLEOTIDE SEQUENCE [LARGE SCALE GENOMIC DNA]</scope>
    <source>
        <strain>CFT073 / ATCC 700928 / UPEC</strain>
    </source>
</reference>
<protein>
    <recommendedName>
        <fullName evidence="1">5'-deoxynucleotidase YfbR</fullName>
        <ecNumber evidence="1">3.1.3.89</ecNumber>
    </recommendedName>
    <alternativeName>
        <fullName evidence="1">5'-deoxyribonucleotidase</fullName>
    </alternativeName>
    <alternativeName>
        <fullName evidence="1">Nucleoside 5'-monophosphate phosphohydrolase</fullName>
    </alternativeName>
</protein>